<feature type="chain" id="PRO_0000095720" description="N-acetyl-D-glucosamine kinase">
    <location>
        <begin position="1"/>
        <end position="303"/>
    </location>
</feature>
<feature type="binding site" evidence="2">
    <location>
        <begin position="4"/>
        <end position="11"/>
    </location>
    <ligand>
        <name>ATP</name>
        <dbReference type="ChEBI" id="CHEBI:30616"/>
    </ligand>
</feature>
<feature type="binding site" evidence="2">
    <location>
        <begin position="133"/>
        <end position="140"/>
    </location>
    <ligand>
        <name>ATP</name>
        <dbReference type="ChEBI" id="CHEBI:30616"/>
    </ligand>
</feature>
<feature type="binding site" evidence="1">
    <location>
        <position position="157"/>
    </location>
    <ligand>
        <name>Zn(2+)</name>
        <dbReference type="ChEBI" id="CHEBI:29105"/>
    </ligand>
</feature>
<feature type="binding site" evidence="1">
    <location>
        <position position="177"/>
    </location>
    <ligand>
        <name>Zn(2+)</name>
        <dbReference type="ChEBI" id="CHEBI:29105"/>
    </ligand>
</feature>
<feature type="binding site" evidence="1">
    <location>
        <position position="179"/>
    </location>
    <ligand>
        <name>Zn(2+)</name>
        <dbReference type="ChEBI" id="CHEBI:29105"/>
    </ligand>
</feature>
<feature type="binding site" evidence="1">
    <location>
        <position position="184"/>
    </location>
    <ligand>
        <name>Zn(2+)</name>
        <dbReference type="ChEBI" id="CHEBI:29105"/>
    </ligand>
</feature>
<keyword id="KW-0067">ATP-binding</keyword>
<keyword id="KW-0119">Carbohydrate metabolism</keyword>
<keyword id="KW-0903">Direct protein sequencing</keyword>
<keyword id="KW-0418">Kinase</keyword>
<keyword id="KW-0479">Metal-binding</keyword>
<keyword id="KW-0547">Nucleotide-binding</keyword>
<keyword id="KW-1185">Reference proteome</keyword>
<keyword id="KW-0808">Transferase</keyword>
<keyword id="KW-0862">Zinc</keyword>
<comment type="function">
    <text evidence="4">Catalyzes the phosphorylation of N-acetyl-D-glucosamine (GlcNAc) derived from cell-wall degradation, yielding GlcNAc-6-P. Has also low level glucokinase activity in vitro.</text>
</comment>
<comment type="catalytic activity">
    <reaction evidence="4">
        <text>N-acetyl-D-glucosamine + ATP = N-acetyl-D-glucosamine 6-phosphate + ADP + H(+)</text>
        <dbReference type="Rhea" id="RHEA:17417"/>
        <dbReference type="ChEBI" id="CHEBI:15378"/>
        <dbReference type="ChEBI" id="CHEBI:30616"/>
        <dbReference type="ChEBI" id="CHEBI:57513"/>
        <dbReference type="ChEBI" id="CHEBI:456216"/>
        <dbReference type="ChEBI" id="CHEBI:506227"/>
        <dbReference type="EC" id="2.7.1.59"/>
    </reaction>
</comment>
<comment type="activity regulation">
    <text evidence="4">Strongly inhibited by ADP.</text>
</comment>
<comment type="biophysicochemical properties">
    <kinetics>
        <KM evidence="3 4">342 uM for GlcNAc (at 37 degrees Celsius and pH 7.5)</KM>
        <KM evidence="3 4">896 uM for ATP (at 37 degrees Celsius and pH 7.5)</KM>
        <KM evidence="3 4">37 mM for glucose (at 37 degrees Celsius and pH 7.5)</KM>
        <KM evidence="3 4">3.4 mM for ATP (at 25 degrees Celsius and pH 7.6)</KM>
        <KM evidence="3 4">3.8 mM for glucose (at 25 degrees Celsius and pH 7.6)</KM>
        <Vmax evidence="3 4">118.0 umol/min/mg enzyme with GlcNAc as substrate (at 37 degrees Celsius and pH 7.5)</Vmax>
        <Vmax evidence="3 4">24.0 umol/min/mg enzyme with glucose as substrate (at 37 degrees Celsius and pH 7.5)</Vmax>
    </kinetics>
    <phDependence>
        <text evidence="4">Active from pH 6.5 to 10.</text>
    </phDependence>
</comment>
<comment type="pathway">
    <text>Cell wall biogenesis; peptidoglycan recycling.</text>
</comment>
<comment type="interaction">
    <interactant intactId="EBI-556240">
        <id>P75959</id>
    </interactant>
    <interactant intactId="EBI-562184">
        <id>P0ACS5</id>
        <label>zntR</label>
    </interactant>
    <organismsDiffer>false</organismsDiffer>
    <experiments>2</experiments>
</comment>
<comment type="similarity">
    <text evidence="5">Belongs to the ROK (NagC/XylR) family. NagK subfamily.</text>
</comment>
<sequence>MYYGFDIGGTKIALGVFDSGRQLQWEKRVPTPRDSYDAFLDAVCELVAEADQRFGCKGSVGIGIPGMPETEDGTLYAANVPAASGKPLRADLSARLDRDVRLDNDANCFALSEAWDDEFTQYPLVMGLILGTGVGGGLIFNGKPITGKSYITGEFGHMRLPVDALTMMGLDFPLRRCGCGQHGCIENYLSGRGFAWLYQHYYHQPLQAPEIIALYDQGDEQARAHVERYLDLLAVCLGNILTIVDPDLVVIGGGLSNFPAITTQLADRLPRHLLPVARVPRIERARHGDAGGMRGAAFLHLTD</sequence>
<evidence type="ECO:0000250" key="1"/>
<evidence type="ECO:0000255" key="2"/>
<evidence type="ECO:0000269" key="3">
    <source>
    </source>
</evidence>
<evidence type="ECO:0000269" key="4">
    <source>
    </source>
</evidence>
<evidence type="ECO:0000305" key="5"/>
<gene>
    <name type="primary">nagK</name>
    <name type="synonym">ycfX</name>
    <name type="ordered locus">b1119</name>
    <name type="ordered locus">JW1105</name>
</gene>
<proteinExistence type="evidence at protein level"/>
<dbReference type="EC" id="2.7.1.59"/>
<dbReference type="EMBL" id="U00096">
    <property type="protein sequence ID" value="AAC74203.1"/>
    <property type="molecule type" value="Genomic_DNA"/>
</dbReference>
<dbReference type="EMBL" id="AP009048">
    <property type="protein sequence ID" value="BAA35939.1"/>
    <property type="molecule type" value="Genomic_DNA"/>
</dbReference>
<dbReference type="PIR" id="D64856">
    <property type="entry name" value="D64856"/>
</dbReference>
<dbReference type="RefSeq" id="NP_415637.1">
    <property type="nucleotide sequence ID" value="NC_000913.3"/>
</dbReference>
<dbReference type="RefSeq" id="WP_000291270.1">
    <property type="nucleotide sequence ID" value="NZ_STEB01000016.1"/>
</dbReference>
<dbReference type="SMR" id="P75959"/>
<dbReference type="BioGRID" id="4260083">
    <property type="interactions" value="19"/>
</dbReference>
<dbReference type="DIP" id="DIP-11548N"/>
<dbReference type="FunCoup" id="P75959">
    <property type="interactions" value="128"/>
</dbReference>
<dbReference type="IntAct" id="P75959">
    <property type="interactions" value="10"/>
</dbReference>
<dbReference type="STRING" id="511145.b1119"/>
<dbReference type="jPOST" id="P75959"/>
<dbReference type="PaxDb" id="511145-b1119"/>
<dbReference type="EnsemblBacteria" id="AAC74203">
    <property type="protein sequence ID" value="AAC74203"/>
    <property type="gene ID" value="b1119"/>
</dbReference>
<dbReference type="GeneID" id="75171243"/>
<dbReference type="GeneID" id="945664"/>
<dbReference type="KEGG" id="ecj:JW1105"/>
<dbReference type="KEGG" id="eco:b1119"/>
<dbReference type="KEGG" id="ecoc:C3026_06740"/>
<dbReference type="PATRIC" id="fig|1411691.4.peg.1148"/>
<dbReference type="EchoBASE" id="EB3216"/>
<dbReference type="eggNOG" id="COG1940">
    <property type="taxonomic scope" value="Bacteria"/>
</dbReference>
<dbReference type="HOGENOM" id="CLU_036604_0_3_6"/>
<dbReference type="InParanoid" id="P75959"/>
<dbReference type="OMA" id="VNVPGWR"/>
<dbReference type="OrthoDB" id="9810372at2"/>
<dbReference type="PhylomeDB" id="P75959"/>
<dbReference type="BioCyc" id="EcoCyc:G6576-MONOMER"/>
<dbReference type="BioCyc" id="MetaCyc:G6576-MONOMER"/>
<dbReference type="SABIO-RK" id="P75959"/>
<dbReference type="UniPathway" id="UPA00544"/>
<dbReference type="PRO" id="PR:P75959"/>
<dbReference type="Proteomes" id="UP000000625">
    <property type="component" value="Chromosome"/>
</dbReference>
<dbReference type="GO" id="GO:0005524">
    <property type="term" value="F:ATP binding"/>
    <property type="evidence" value="ECO:0007669"/>
    <property type="project" value="UniProtKB-UniRule"/>
</dbReference>
<dbReference type="GO" id="GO:0045127">
    <property type="term" value="F:N-acetylglucosamine kinase activity"/>
    <property type="evidence" value="ECO:0000314"/>
    <property type="project" value="EcoCyc"/>
</dbReference>
<dbReference type="GO" id="GO:0008270">
    <property type="term" value="F:zinc ion binding"/>
    <property type="evidence" value="ECO:0007669"/>
    <property type="project" value="UniProtKB-UniRule"/>
</dbReference>
<dbReference type="GO" id="GO:0006044">
    <property type="term" value="P:N-acetylglucosamine metabolic process"/>
    <property type="evidence" value="ECO:0007669"/>
    <property type="project" value="UniProtKB-UniRule"/>
</dbReference>
<dbReference type="GO" id="GO:0009254">
    <property type="term" value="P:peptidoglycan turnover"/>
    <property type="evidence" value="ECO:0000269"/>
    <property type="project" value="EcoCyc"/>
</dbReference>
<dbReference type="CDD" id="cd24057">
    <property type="entry name" value="ASKHA_NBD_ROK_NAGK"/>
    <property type="match status" value="1"/>
</dbReference>
<dbReference type="FunFam" id="3.30.420.40:FF:000049">
    <property type="entry name" value="N-acetyl-D-glucosamine kinase"/>
    <property type="match status" value="1"/>
</dbReference>
<dbReference type="FunFam" id="3.30.420.40:FF:000051">
    <property type="entry name" value="N-acetyl-D-glucosamine kinase"/>
    <property type="match status" value="1"/>
</dbReference>
<dbReference type="Gene3D" id="3.30.420.40">
    <property type="match status" value="2"/>
</dbReference>
<dbReference type="HAMAP" id="MF_01271">
    <property type="entry name" value="GlcNAc_kinase"/>
    <property type="match status" value="1"/>
</dbReference>
<dbReference type="InterPro" id="IPR043129">
    <property type="entry name" value="ATPase_NBD"/>
</dbReference>
<dbReference type="InterPro" id="IPR023505">
    <property type="entry name" value="N-acetyl-D-glucosamine_kinase"/>
</dbReference>
<dbReference type="InterPro" id="IPR000600">
    <property type="entry name" value="ROK"/>
</dbReference>
<dbReference type="InterPro" id="IPR049874">
    <property type="entry name" value="ROK_cs"/>
</dbReference>
<dbReference type="NCBIfam" id="NF009835">
    <property type="entry name" value="PRK13310.1"/>
    <property type="match status" value="1"/>
</dbReference>
<dbReference type="PANTHER" id="PTHR18964:SF162">
    <property type="entry name" value="N-ACETYL-D-GLUCOSAMINE KINASE"/>
    <property type="match status" value="1"/>
</dbReference>
<dbReference type="PANTHER" id="PTHR18964">
    <property type="entry name" value="ROK (REPRESSOR, ORF, KINASE) FAMILY"/>
    <property type="match status" value="1"/>
</dbReference>
<dbReference type="Pfam" id="PF00480">
    <property type="entry name" value="ROK"/>
    <property type="match status" value="1"/>
</dbReference>
<dbReference type="SUPFAM" id="SSF53067">
    <property type="entry name" value="Actin-like ATPase domain"/>
    <property type="match status" value="1"/>
</dbReference>
<dbReference type="PROSITE" id="PS01125">
    <property type="entry name" value="ROK"/>
    <property type="match status" value="1"/>
</dbReference>
<reference key="1">
    <citation type="journal article" date="1996" name="DNA Res.">
        <title>A 718-kb DNA sequence of the Escherichia coli K-12 genome corresponding to the 12.7-28.0 min region on the linkage map.</title>
        <authorList>
            <person name="Oshima T."/>
            <person name="Aiba H."/>
            <person name="Baba T."/>
            <person name="Fujita K."/>
            <person name="Hayashi K."/>
            <person name="Honjo A."/>
            <person name="Ikemoto K."/>
            <person name="Inada T."/>
            <person name="Itoh T."/>
            <person name="Kajihara M."/>
            <person name="Kanai K."/>
            <person name="Kashimoto K."/>
            <person name="Kimura S."/>
            <person name="Kitagawa M."/>
            <person name="Makino K."/>
            <person name="Masuda S."/>
            <person name="Miki T."/>
            <person name="Mizobuchi K."/>
            <person name="Mori H."/>
            <person name="Motomura K."/>
            <person name="Nakamura Y."/>
            <person name="Nashimoto H."/>
            <person name="Nishio Y."/>
            <person name="Saito N."/>
            <person name="Sampei G."/>
            <person name="Seki Y."/>
            <person name="Tagami H."/>
            <person name="Takemoto K."/>
            <person name="Wada C."/>
            <person name="Yamamoto Y."/>
            <person name="Yano M."/>
            <person name="Horiuchi T."/>
        </authorList>
    </citation>
    <scope>NUCLEOTIDE SEQUENCE [LARGE SCALE GENOMIC DNA]</scope>
    <source>
        <strain>K12 / W3110 / ATCC 27325 / DSM 5911</strain>
    </source>
</reference>
<reference key="2">
    <citation type="journal article" date="1997" name="Science">
        <title>The complete genome sequence of Escherichia coli K-12.</title>
        <authorList>
            <person name="Blattner F.R."/>
            <person name="Plunkett G. III"/>
            <person name="Bloch C.A."/>
            <person name="Perna N.T."/>
            <person name="Burland V."/>
            <person name="Riley M."/>
            <person name="Collado-Vides J."/>
            <person name="Glasner J.D."/>
            <person name="Rode C.K."/>
            <person name="Mayhew G.F."/>
            <person name="Gregor J."/>
            <person name="Davis N.W."/>
            <person name="Kirkpatrick H.A."/>
            <person name="Goeden M.A."/>
            <person name="Rose D.J."/>
            <person name="Mau B."/>
            <person name="Shao Y."/>
        </authorList>
    </citation>
    <scope>NUCLEOTIDE SEQUENCE [LARGE SCALE GENOMIC DNA]</scope>
    <source>
        <strain>K12 / MG1655 / ATCC 47076</strain>
    </source>
</reference>
<reference key="3">
    <citation type="journal article" date="2006" name="Mol. Syst. Biol.">
        <title>Highly accurate genome sequences of Escherichia coli K-12 strains MG1655 and W3110.</title>
        <authorList>
            <person name="Hayashi K."/>
            <person name="Morooka N."/>
            <person name="Yamamoto Y."/>
            <person name="Fujita K."/>
            <person name="Isono K."/>
            <person name="Choi S."/>
            <person name="Ohtsubo E."/>
            <person name="Baba T."/>
            <person name="Wanner B.L."/>
            <person name="Mori H."/>
            <person name="Horiuchi T."/>
        </authorList>
    </citation>
    <scope>NUCLEOTIDE SEQUENCE [LARGE SCALE GENOMIC DNA]</scope>
    <source>
        <strain>K12 / W3110 / ATCC 27325 / DSM 5911</strain>
    </source>
</reference>
<reference key="4">
    <citation type="journal article" date="2004" name="J. Bacteriol.">
        <title>The N-acetyl-D-glucosamine kinase of Escherichia coli and its role in murein recycling.</title>
        <authorList>
            <person name="Uehara T."/>
            <person name="Park J.T."/>
        </authorList>
    </citation>
    <scope>PROTEIN SEQUENCE OF 1-6</scope>
    <scope>FUNCTION</scope>
    <scope>CATALYTIC ACTIVITY</scope>
    <scope>SUBSTRATE SPECIFICITY</scope>
    <scope>ACTIVITY REGULATION</scope>
    <scope>BIOPHYSICOCHEMICAL PROPERTIES</scope>
    <source>
        <strain>K12 / MG1655 / ATCC 47076</strain>
    </source>
</reference>
<reference key="5">
    <citation type="journal article" date="2004" name="Biochemistry">
        <title>Identifying latent enzyme activities: substrate ambiguity within modern bacterial sugar kinases.</title>
        <authorList>
            <person name="Miller B.G."/>
            <person name="Raines R.T."/>
        </authorList>
    </citation>
    <scope>IN VITRO FUNCTION</scope>
    <scope>KINETIC PARAMETERS</scope>
    <source>
        <strain>K12 / MC4100 / ATCC 35695 / DSM 6574</strain>
    </source>
</reference>
<organism>
    <name type="scientific">Escherichia coli (strain K12)</name>
    <dbReference type="NCBI Taxonomy" id="83333"/>
    <lineage>
        <taxon>Bacteria</taxon>
        <taxon>Pseudomonadati</taxon>
        <taxon>Pseudomonadota</taxon>
        <taxon>Gammaproteobacteria</taxon>
        <taxon>Enterobacterales</taxon>
        <taxon>Enterobacteriaceae</taxon>
        <taxon>Escherichia</taxon>
    </lineage>
</organism>
<name>NAGK_ECOLI</name>
<accession>P75959</accession>
<protein>
    <recommendedName>
        <fullName>N-acetyl-D-glucosamine kinase</fullName>
        <ecNumber>2.7.1.59</ecNumber>
    </recommendedName>
    <alternativeName>
        <fullName>GlcNAc kinase</fullName>
    </alternativeName>
</protein>